<proteinExistence type="inferred from homology"/>
<accession>B4RCZ4</accession>
<keyword id="KW-0030">Aminoacyl-tRNA synthetase</keyword>
<keyword id="KW-0067">ATP-binding</keyword>
<keyword id="KW-0963">Cytoplasm</keyword>
<keyword id="KW-0436">Ligase</keyword>
<keyword id="KW-0547">Nucleotide-binding</keyword>
<keyword id="KW-0648">Protein biosynthesis</keyword>
<keyword id="KW-1185">Reference proteome</keyword>
<organism>
    <name type="scientific">Phenylobacterium zucineum (strain HLK1)</name>
    <dbReference type="NCBI Taxonomy" id="450851"/>
    <lineage>
        <taxon>Bacteria</taxon>
        <taxon>Pseudomonadati</taxon>
        <taxon>Pseudomonadota</taxon>
        <taxon>Alphaproteobacteria</taxon>
        <taxon>Caulobacterales</taxon>
        <taxon>Caulobacteraceae</taxon>
        <taxon>Phenylobacterium</taxon>
    </lineage>
</organism>
<dbReference type="EC" id="6.1.1.4" evidence="1"/>
<dbReference type="EMBL" id="CP000747">
    <property type="protein sequence ID" value="ACG79926.1"/>
    <property type="molecule type" value="Genomic_DNA"/>
</dbReference>
<dbReference type="RefSeq" id="WP_012524064.1">
    <property type="nucleotide sequence ID" value="NC_011144.1"/>
</dbReference>
<dbReference type="SMR" id="B4RCZ4"/>
<dbReference type="STRING" id="450851.PHZ_c3517"/>
<dbReference type="KEGG" id="pzu:PHZ_c3517"/>
<dbReference type="eggNOG" id="COG0495">
    <property type="taxonomic scope" value="Bacteria"/>
</dbReference>
<dbReference type="HOGENOM" id="CLU_004427_0_0_5"/>
<dbReference type="OrthoDB" id="9810365at2"/>
<dbReference type="Proteomes" id="UP000001868">
    <property type="component" value="Chromosome"/>
</dbReference>
<dbReference type="GO" id="GO:0005829">
    <property type="term" value="C:cytosol"/>
    <property type="evidence" value="ECO:0007669"/>
    <property type="project" value="TreeGrafter"/>
</dbReference>
<dbReference type="GO" id="GO:0002161">
    <property type="term" value="F:aminoacyl-tRNA deacylase activity"/>
    <property type="evidence" value="ECO:0007669"/>
    <property type="project" value="InterPro"/>
</dbReference>
<dbReference type="GO" id="GO:0005524">
    <property type="term" value="F:ATP binding"/>
    <property type="evidence" value="ECO:0007669"/>
    <property type="project" value="UniProtKB-UniRule"/>
</dbReference>
<dbReference type="GO" id="GO:0004823">
    <property type="term" value="F:leucine-tRNA ligase activity"/>
    <property type="evidence" value="ECO:0007669"/>
    <property type="project" value="UniProtKB-UniRule"/>
</dbReference>
<dbReference type="GO" id="GO:0006429">
    <property type="term" value="P:leucyl-tRNA aminoacylation"/>
    <property type="evidence" value="ECO:0007669"/>
    <property type="project" value="UniProtKB-UniRule"/>
</dbReference>
<dbReference type="CDD" id="cd07958">
    <property type="entry name" value="Anticodon_Ia_Leu_BEm"/>
    <property type="match status" value="1"/>
</dbReference>
<dbReference type="CDD" id="cd00812">
    <property type="entry name" value="LeuRS_core"/>
    <property type="match status" value="1"/>
</dbReference>
<dbReference type="FunFam" id="1.10.730.10:FF:000002">
    <property type="entry name" value="Leucine--tRNA ligase"/>
    <property type="match status" value="1"/>
</dbReference>
<dbReference type="Gene3D" id="2.20.28.290">
    <property type="match status" value="1"/>
</dbReference>
<dbReference type="Gene3D" id="3.10.20.590">
    <property type="match status" value="1"/>
</dbReference>
<dbReference type="Gene3D" id="3.40.50.620">
    <property type="entry name" value="HUPs"/>
    <property type="match status" value="2"/>
</dbReference>
<dbReference type="Gene3D" id="1.10.730.10">
    <property type="entry name" value="Isoleucyl-tRNA Synthetase, Domain 1"/>
    <property type="match status" value="2"/>
</dbReference>
<dbReference type="HAMAP" id="MF_00049_B">
    <property type="entry name" value="Leu_tRNA_synth_B"/>
    <property type="match status" value="1"/>
</dbReference>
<dbReference type="InterPro" id="IPR001412">
    <property type="entry name" value="aa-tRNA-synth_I_CS"/>
</dbReference>
<dbReference type="InterPro" id="IPR002300">
    <property type="entry name" value="aa-tRNA-synth_Ia"/>
</dbReference>
<dbReference type="InterPro" id="IPR002302">
    <property type="entry name" value="Leu-tRNA-ligase"/>
</dbReference>
<dbReference type="InterPro" id="IPR025709">
    <property type="entry name" value="Leu_tRNA-synth_edit"/>
</dbReference>
<dbReference type="InterPro" id="IPR013155">
    <property type="entry name" value="M/V/L/I-tRNA-synth_anticd-bd"/>
</dbReference>
<dbReference type="InterPro" id="IPR015413">
    <property type="entry name" value="Methionyl/Leucyl_tRNA_Synth"/>
</dbReference>
<dbReference type="InterPro" id="IPR014729">
    <property type="entry name" value="Rossmann-like_a/b/a_fold"/>
</dbReference>
<dbReference type="InterPro" id="IPR009080">
    <property type="entry name" value="tRNAsynth_Ia_anticodon-bd"/>
</dbReference>
<dbReference type="InterPro" id="IPR009008">
    <property type="entry name" value="Val/Leu/Ile-tRNA-synth_edit"/>
</dbReference>
<dbReference type="NCBIfam" id="TIGR00396">
    <property type="entry name" value="leuS_bact"/>
    <property type="match status" value="1"/>
</dbReference>
<dbReference type="PANTHER" id="PTHR43740:SF2">
    <property type="entry name" value="LEUCINE--TRNA LIGASE, MITOCHONDRIAL"/>
    <property type="match status" value="1"/>
</dbReference>
<dbReference type="PANTHER" id="PTHR43740">
    <property type="entry name" value="LEUCYL-TRNA SYNTHETASE"/>
    <property type="match status" value="1"/>
</dbReference>
<dbReference type="Pfam" id="PF08264">
    <property type="entry name" value="Anticodon_1"/>
    <property type="match status" value="1"/>
</dbReference>
<dbReference type="Pfam" id="PF00133">
    <property type="entry name" value="tRNA-synt_1"/>
    <property type="match status" value="2"/>
</dbReference>
<dbReference type="Pfam" id="PF13603">
    <property type="entry name" value="tRNA-synt_1_2"/>
    <property type="match status" value="1"/>
</dbReference>
<dbReference type="Pfam" id="PF09334">
    <property type="entry name" value="tRNA-synt_1g"/>
    <property type="match status" value="1"/>
</dbReference>
<dbReference type="PRINTS" id="PR00985">
    <property type="entry name" value="TRNASYNTHLEU"/>
</dbReference>
<dbReference type="SUPFAM" id="SSF47323">
    <property type="entry name" value="Anticodon-binding domain of a subclass of class I aminoacyl-tRNA synthetases"/>
    <property type="match status" value="1"/>
</dbReference>
<dbReference type="SUPFAM" id="SSF52374">
    <property type="entry name" value="Nucleotidylyl transferase"/>
    <property type="match status" value="1"/>
</dbReference>
<dbReference type="SUPFAM" id="SSF50677">
    <property type="entry name" value="ValRS/IleRS/LeuRS editing domain"/>
    <property type="match status" value="1"/>
</dbReference>
<dbReference type="PROSITE" id="PS00178">
    <property type="entry name" value="AA_TRNA_LIGASE_I"/>
    <property type="match status" value="1"/>
</dbReference>
<reference key="1">
    <citation type="journal article" date="2008" name="BMC Genomics">
        <title>Complete genome of Phenylobacterium zucineum - a novel facultative intracellular bacterium isolated from human erythroleukemia cell line K562.</title>
        <authorList>
            <person name="Luo Y."/>
            <person name="Xu X."/>
            <person name="Ding Z."/>
            <person name="Liu Z."/>
            <person name="Zhang B."/>
            <person name="Yan Z."/>
            <person name="Sun J."/>
            <person name="Hu S."/>
            <person name="Hu X."/>
        </authorList>
    </citation>
    <scope>NUCLEOTIDE SEQUENCE [LARGE SCALE GENOMIC DNA]</scope>
    <source>
        <strain>HLK1</strain>
    </source>
</reference>
<protein>
    <recommendedName>
        <fullName evidence="1">Leucine--tRNA ligase</fullName>
        <ecNumber evidence="1">6.1.1.4</ecNumber>
    </recommendedName>
    <alternativeName>
        <fullName evidence="1">Leucyl-tRNA synthetase</fullName>
        <shortName evidence="1">LeuRS</shortName>
    </alternativeName>
</protein>
<evidence type="ECO:0000255" key="1">
    <source>
        <dbReference type="HAMAP-Rule" id="MF_00049"/>
    </source>
</evidence>
<sequence>MAATRYNPKETEPKWRKRWDEAQAFRAVEAPGKRKYYVLEMFPYPSGRLHMGHVRNYALGDVIARYKRAQDFSVLHPMGWDAFGLPAENAAMERGVDPKAWTYDNIARMRAELKELGLSIDWSREFATCDVEYYGQQQALFLELFERGLVYRKESVVNWDPVDQTVLANEQVVDGKGWRSGAPVEKRKLAQWFLKITQYADQLVDDLKTLDRWPEKVRVMQENWIGRSKGARLRFRFAGQPPAGHEAGVEVYTTRPDTLFGASFVGVAPDHPLAQAVAAANPEAAAFIEKCRHGAVSEAEIETAEKEGFDTGLKVKHPFDPSWELPVWIANFILMDYGTGAIFGCPAHDQRDLDFARKYGLPVKPVVLPPEEAQAEAIVQKLLNEAYTGPGRIINSGFLDGLDVEAAKAAAIARIEEQGDGQGATVYRLRDWGVSRQRAWGCPIPVVHCQACGVVPVRRSDLPLTHPADIEFGKAGNALERHPTWKHTTCPGCGGPATRETDTLDTFVDSSWYFARFANPGAEAPIDKAAADYWLPVDQYIGGVEHAVLHLLYARFITKALADVGMLSVREPFAGLFTQGMVTHETYRKQSGEWVEPKEVEVTAEGKTRRARLVGSGEPVVIGDVEKMSKSKKNTVAPEEIFDVYGVDAARLFVLSDSPPERDAQWSTSGVQGAWRFVNRVWDEFDASEEPVPGTEEAVTGVATDNLRRQHAKTVKAVTEAIEGFRFNSAIAHLYSFLNVLKAERPQGRAGALAHAHRAALRDFALLIAPFTPHLAEECWARIGGQGLVVEAPWPTYDPALTQDAVKVLPVQVNGKRRGEISAPAGAEPAEVEQLVLADPEIKARLEGLTIRKIIVVKDRIVNIVAA</sequence>
<comment type="catalytic activity">
    <reaction evidence="1">
        <text>tRNA(Leu) + L-leucine + ATP = L-leucyl-tRNA(Leu) + AMP + diphosphate</text>
        <dbReference type="Rhea" id="RHEA:11688"/>
        <dbReference type="Rhea" id="RHEA-COMP:9613"/>
        <dbReference type="Rhea" id="RHEA-COMP:9622"/>
        <dbReference type="ChEBI" id="CHEBI:30616"/>
        <dbReference type="ChEBI" id="CHEBI:33019"/>
        <dbReference type="ChEBI" id="CHEBI:57427"/>
        <dbReference type="ChEBI" id="CHEBI:78442"/>
        <dbReference type="ChEBI" id="CHEBI:78494"/>
        <dbReference type="ChEBI" id="CHEBI:456215"/>
        <dbReference type="EC" id="6.1.1.4"/>
    </reaction>
</comment>
<comment type="subcellular location">
    <subcellularLocation>
        <location evidence="1">Cytoplasm</location>
    </subcellularLocation>
</comment>
<comment type="similarity">
    <text evidence="1">Belongs to the class-I aminoacyl-tRNA synthetase family.</text>
</comment>
<gene>
    <name evidence="1" type="primary">leuS</name>
    <name type="ordered locus">PHZ_c3517</name>
</gene>
<feature type="chain" id="PRO_1000199218" description="Leucine--tRNA ligase">
    <location>
        <begin position="1"/>
        <end position="867"/>
    </location>
</feature>
<feature type="short sequence motif" description="'HIGH' region">
    <location>
        <begin position="43"/>
        <end position="53"/>
    </location>
</feature>
<feature type="short sequence motif" description="'KMSKS' region">
    <location>
        <begin position="627"/>
        <end position="631"/>
    </location>
</feature>
<feature type="binding site" evidence="1">
    <location>
        <position position="630"/>
    </location>
    <ligand>
        <name>ATP</name>
        <dbReference type="ChEBI" id="CHEBI:30616"/>
    </ligand>
</feature>
<name>SYL_PHEZH</name>